<sequence length="708" mass="79535">MPRFAIIFALLIAYSLFLSTLFTGSIPDRANTVTSNAPCQVVIWDWIRTRRICNCCSRLCYSLLGRSNLSRTAKRGVCTIAGAVLATAAVIVAAVLVGKSSGSATKRGLTKTISVLNHTIPFTDHILNGQTLSNGTGSNFVTIGFSGYAVHATIKRASTTDIISWVIPESMEPTLARVASYVSSSSINLAAVPDTGGNASALSFQNAVQEFATSWVSMTYDQSYGDLRNVANDEGGEEILILMRKRSYRISFQVIETGSTALLLRTRRVVSQLITMTYLVTVQARVGIQIGDIFQHYGGIDNYVMTSISVLRTLEDKAFHENKLLIVREPPNKSNQDANQSYRLRPFSANDLIQNLKSVDIGFLAFCSFFDKYAHYPEIIMMKITIFISKGNLWSIIYVIQARYVRKRVMKVRGQMPGGLLTNMESLLNIVSTPNLNISEFHIQTHSMSQSKPMYFQKQCYSSQNNIIYIYNSIHITCGAVYVIVHDVRTPSVFVLIELRNCKPLKNSWCETTKTSPRDTKIKKNEYNETVCRRAGALLDGRVRTIRFLMMRTHWSRVKGVSCNTANRLSRFCNHVVSYYPSQNATIHLLPTSLRAESLEQQYTTRPLSSSNNRFCCLKSIFINNCKKACESPSLVSCNLQQTAELLMVYYLYICEACYVSRNHDLLSKQCMSTVRAVYVARMRLPKFRSTFPCMPRLCWLVNGVVVV</sequence>
<protein>
    <recommendedName>
        <fullName>Killer toxin KHS</fullName>
    </recommendedName>
    <alternativeName>
        <fullName>Killer of heat sensitive</fullName>
    </alternativeName>
</protein>
<dbReference type="EMBL" id="S77712">
    <property type="protein sequence ID" value="AAC60532.1"/>
    <property type="molecule type" value="Genomic_DNA"/>
</dbReference>
<dbReference type="PIR" id="JQ1148">
    <property type="entry name" value="JQ1148"/>
</dbReference>
<dbReference type="SGD" id="S000080162">
    <property type="gene designation" value="KHS1"/>
</dbReference>
<dbReference type="GO" id="GO:0005576">
    <property type="term" value="C:extracellular region"/>
    <property type="evidence" value="ECO:0000314"/>
    <property type="project" value="SGD"/>
</dbReference>
<dbReference type="GO" id="GO:0005886">
    <property type="term" value="C:plasma membrane"/>
    <property type="evidence" value="ECO:0007669"/>
    <property type="project" value="UniProtKB-SubCell"/>
</dbReference>
<dbReference type="GO" id="GO:0090729">
    <property type="term" value="F:toxin activity"/>
    <property type="evidence" value="ECO:0007669"/>
    <property type="project" value="UniProtKB-KW"/>
</dbReference>
<name>KHS1_YEASX</name>
<accession>P39690</accession>
<feature type="signal peptide" evidence="1">
    <location>
        <begin position="1"/>
        <end position="27"/>
    </location>
</feature>
<feature type="propeptide" id="PRO_0000021542" evidence="2">
    <location>
        <begin position="28"/>
        <end position="36"/>
    </location>
</feature>
<feature type="chain" id="PRO_0000021543" description="Killer toxin KHS">
    <location>
        <begin position="37"/>
        <end position="708"/>
    </location>
</feature>
<feature type="transmembrane region" description="Helical" evidence="1">
    <location>
        <begin position="77"/>
        <end position="97"/>
    </location>
</feature>
<feature type="transmembrane region" description="Helical" evidence="1">
    <location>
        <begin position="380"/>
        <end position="400"/>
    </location>
</feature>
<feature type="transmembrane region" description="Helical" evidence="1">
    <location>
        <begin position="466"/>
        <end position="486"/>
    </location>
</feature>
<reference key="1">
    <citation type="journal article" date="1991" name="Agric. Biol. Chem.">
        <title>Cloning and nucleotide sequence of the KHS killer gene of Saccharomyces cerevisiae.</title>
        <authorList>
            <person name="Goto K."/>
            <person name="Fukuda H."/>
            <person name="Kichise K."/>
            <person name="Kitano K."/>
            <person name="Hara S."/>
        </authorList>
    </citation>
    <scope>NUCLEOTIDE SEQUENCE [GENOMIC DNA]</scope>
    <scope>PROTEIN SEQUENCE OF 37-42</scope>
    <source>
        <strain>115</strain>
    </source>
</reference>
<proteinExistence type="evidence at protein level"/>
<gene>
    <name type="primary">KHS1</name>
    <name type="synonym">KHS</name>
</gene>
<comment type="function">
    <text>Kills sensitive strains of yeast.</text>
</comment>
<comment type="biophysicochemical properties">
    <phDependence>
        <text>Optimum pH is 4-4.5.</text>
    </phDependence>
    <temperatureDependence>
        <text>Unstable above 30 degrees Celsius.</text>
    </temperatureDependence>
</comment>
<comment type="subunit">
    <text>Monomer.</text>
</comment>
<comment type="subcellular location">
    <subcellularLocation>
        <location>Cell membrane</location>
        <topology>Multi-pass membrane protein</topology>
    </subcellularLocation>
</comment>
<comment type="similarity">
    <text evidence="3">To yeast YER187w.</text>
</comment>
<organism>
    <name type="scientific">Saccharomyces cerevisiae</name>
    <name type="common">Baker's yeast</name>
    <dbReference type="NCBI Taxonomy" id="4932"/>
    <lineage>
        <taxon>Eukaryota</taxon>
        <taxon>Fungi</taxon>
        <taxon>Dikarya</taxon>
        <taxon>Ascomycota</taxon>
        <taxon>Saccharomycotina</taxon>
        <taxon>Saccharomycetes</taxon>
        <taxon>Saccharomycetales</taxon>
        <taxon>Saccharomycetaceae</taxon>
        <taxon>Saccharomyces</taxon>
    </lineage>
</organism>
<evidence type="ECO:0000255" key="1"/>
<evidence type="ECO:0000269" key="2">
    <source>
    </source>
</evidence>
<evidence type="ECO:0000305" key="3"/>
<keyword id="KW-1003">Cell membrane</keyword>
<keyword id="KW-0903">Direct protein sequencing</keyword>
<keyword id="KW-0472">Membrane</keyword>
<keyword id="KW-0732">Signal</keyword>
<keyword id="KW-0800">Toxin</keyword>
<keyword id="KW-0812">Transmembrane</keyword>
<keyword id="KW-1133">Transmembrane helix</keyword>